<gene>
    <name evidence="1" type="primary">rpsF</name>
    <name type="ordered locus">Cphamn1_0162</name>
</gene>
<comment type="function">
    <text evidence="1">Binds together with bS18 to 16S ribosomal RNA.</text>
</comment>
<comment type="similarity">
    <text evidence="1">Belongs to the bacterial ribosomal protein bS6 family.</text>
</comment>
<feature type="chain" id="PRO_1000120725" description="Small ribosomal subunit protein bS6">
    <location>
        <begin position="1"/>
        <end position="134"/>
    </location>
</feature>
<name>RS6_CHLPB</name>
<protein>
    <recommendedName>
        <fullName evidence="1">Small ribosomal subunit protein bS6</fullName>
    </recommendedName>
    <alternativeName>
        <fullName evidence="2">30S ribosomal protein S6</fullName>
    </alternativeName>
</protein>
<sequence length="134" mass="14973">MEIKKLYECTVIINGGLEDDAIAATMDEVRNVIAKNGGDIENVLEVGRRTMAYPIGKQTIGSYAHIEFRGEPSGLAAIETAFRYNENILRFLIVHLSTPLLEMRKRVEKYSVVIGSPEDQSEEDQQEESVAAKK</sequence>
<proteinExistence type="inferred from homology"/>
<reference key="1">
    <citation type="submission" date="2008-06" db="EMBL/GenBank/DDBJ databases">
        <title>Complete sequence of Chlorobium phaeobacteroides BS1.</title>
        <authorList>
            <consortium name="US DOE Joint Genome Institute"/>
            <person name="Lucas S."/>
            <person name="Copeland A."/>
            <person name="Lapidus A."/>
            <person name="Glavina del Rio T."/>
            <person name="Dalin E."/>
            <person name="Tice H."/>
            <person name="Bruce D."/>
            <person name="Goodwin L."/>
            <person name="Pitluck S."/>
            <person name="Schmutz J."/>
            <person name="Larimer F."/>
            <person name="Land M."/>
            <person name="Hauser L."/>
            <person name="Kyrpides N."/>
            <person name="Ovchinnikova G."/>
            <person name="Li T."/>
            <person name="Liu Z."/>
            <person name="Zhao F."/>
            <person name="Overmann J."/>
            <person name="Bryant D.A."/>
            <person name="Richardson P."/>
        </authorList>
    </citation>
    <scope>NUCLEOTIDE SEQUENCE [LARGE SCALE GENOMIC DNA]</scope>
    <source>
        <strain>BS1</strain>
    </source>
</reference>
<accession>B3EKF9</accession>
<dbReference type="EMBL" id="CP001101">
    <property type="protein sequence ID" value="ACE03137.1"/>
    <property type="molecule type" value="Genomic_DNA"/>
</dbReference>
<dbReference type="SMR" id="B3EKF9"/>
<dbReference type="STRING" id="331678.Cphamn1_0162"/>
<dbReference type="KEGG" id="cpb:Cphamn1_0162"/>
<dbReference type="eggNOG" id="COG0360">
    <property type="taxonomic scope" value="Bacteria"/>
</dbReference>
<dbReference type="HOGENOM" id="CLU_113441_4_1_10"/>
<dbReference type="OrthoDB" id="9812702at2"/>
<dbReference type="GO" id="GO:1990904">
    <property type="term" value="C:ribonucleoprotein complex"/>
    <property type="evidence" value="ECO:0007669"/>
    <property type="project" value="UniProtKB-KW"/>
</dbReference>
<dbReference type="GO" id="GO:0005840">
    <property type="term" value="C:ribosome"/>
    <property type="evidence" value="ECO:0007669"/>
    <property type="project" value="UniProtKB-KW"/>
</dbReference>
<dbReference type="GO" id="GO:0019843">
    <property type="term" value="F:rRNA binding"/>
    <property type="evidence" value="ECO:0007669"/>
    <property type="project" value="UniProtKB-UniRule"/>
</dbReference>
<dbReference type="GO" id="GO:0003735">
    <property type="term" value="F:structural constituent of ribosome"/>
    <property type="evidence" value="ECO:0007669"/>
    <property type="project" value="InterPro"/>
</dbReference>
<dbReference type="GO" id="GO:0006412">
    <property type="term" value="P:translation"/>
    <property type="evidence" value="ECO:0007669"/>
    <property type="project" value="UniProtKB-UniRule"/>
</dbReference>
<dbReference type="CDD" id="cd00473">
    <property type="entry name" value="bS6"/>
    <property type="match status" value="1"/>
</dbReference>
<dbReference type="Gene3D" id="3.30.70.60">
    <property type="match status" value="1"/>
</dbReference>
<dbReference type="HAMAP" id="MF_00360">
    <property type="entry name" value="Ribosomal_bS6"/>
    <property type="match status" value="1"/>
</dbReference>
<dbReference type="InterPro" id="IPR000529">
    <property type="entry name" value="Ribosomal_bS6"/>
</dbReference>
<dbReference type="InterPro" id="IPR035980">
    <property type="entry name" value="Ribosomal_bS6_sf"/>
</dbReference>
<dbReference type="InterPro" id="IPR020814">
    <property type="entry name" value="Ribosomal_S6_plastid/chlpt"/>
</dbReference>
<dbReference type="InterPro" id="IPR014717">
    <property type="entry name" value="Transl_elong_EF1B/ribsomal_bS6"/>
</dbReference>
<dbReference type="NCBIfam" id="TIGR00166">
    <property type="entry name" value="S6"/>
    <property type="match status" value="1"/>
</dbReference>
<dbReference type="Pfam" id="PF01250">
    <property type="entry name" value="Ribosomal_S6"/>
    <property type="match status" value="1"/>
</dbReference>
<dbReference type="SUPFAM" id="SSF54995">
    <property type="entry name" value="Ribosomal protein S6"/>
    <property type="match status" value="1"/>
</dbReference>
<keyword id="KW-0687">Ribonucleoprotein</keyword>
<keyword id="KW-0689">Ribosomal protein</keyword>
<keyword id="KW-0694">RNA-binding</keyword>
<keyword id="KW-0699">rRNA-binding</keyword>
<organism>
    <name type="scientific">Chlorobium phaeobacteroides (strain BS1)</name>
    <dbReference type="NCBI Taxonomy" id="331678"/>
    <lineage>
        <taxon>Bacteria</taxon>
        <taxon>Pseudomonadati</taxon>
        <taxon>Chlorobiota</taxon>
        <taxon>Chlorobiia</taxon>
        <taxon>Chlorobiales</taxon>
        <taxon>Chlorobiaceae</taxon>
        <taxon>Chlorobium/Pelodictyon group</taxon>
        <taxon>Chlorobium</taxon>
    </lineage>
</organism>
<evidence type="ECO:0000255" key="1">
    <source>
        <dbReference type="HAMAP-Rule" id="MF_00360"/>
    </source>
</evidence>
<evidence type="ECO:0000305" key="2"/>